<accession>A0A804HLA8</accession>
<keyword id="KW-1003">Cell membrane</keyword>
<keyword id="KW-0449">Lipoprotein</keyword>
<keyword id="KW-0472">Membrane</keyword>
<keyword id="KW-0488">Methylation</keyword>
<keyword id="KW-0636">Prenylation</keyword>
<keyword id="KW-1185">Reference proteome</keyword>
<keyword id="KW-0807">Transducer</keyword>
<proteinExistence type="inferred from homology"/>
<protein>
    <recommendedName>
        <fullName evidence="4">Guanine nucleotide-binding protein G(I)/G(S)/G(O) subunit gamma-5B</fullName>
    </recommendedName>
</protein>
<organism>
    <name type="scientific">Homo sapiens</name>
    <name type="common">Human</name>
    <dbReference type="NCBI Taxonomy" id="9606"/>
    <lineage>
        <taxon>Eukaryota</taxon>
        <taxon>Metazoa</taxon>
        <taxon>Chordata</taxon>
        <taxon>Craniata</taxon>
        <taxon>Vertebrata</taxon>
        <taxon>Euteleostomi</taxon>
        <taxon>Mammalia</taxon>
        <taxon>Eutheria</taxon>
        <taxon>Euarchontoglires</taxon>
        <taxon>Primates</taxon>
        <taxon>Haplorrhini</taxon>
        <taxon>Catarrhini</taxon>
        <taxon>Hominidae</taxon>
        <taxon>Homo</taxon>
    </lineage>
</organism>
<name>GBG5B_HUMAN</name>
<evidence type="ECO:0000250" key="1">
    <source>
        <dbReference type="UniProtKB" id="P63212"/>
    </source>
</evidence>
<evidence type="ECO:0000250" key="2">
    <source>
        <dbReference type="UniProtKB" id="Q9UBI6"/>
    </source>
</evidence>
<evidence type="ECO:0000255" key="3">
    <source>
        <dbReference type="PROSITE-ProRule" id="PRU00592"/>
    </source>
</evidence>
<evidence type="ECO:0000305" key="4"/>
<evidence type="ECO:0000312" key="5">
    <source>
        <dbReference type="HGNC" id="HGNC:24826"/>
    </source>
</evidence>
<reference key="1">
    <citation type="journal article" date="2005" name="Nature">
        <title>The DNA sequence of the human X chromosome.</title>
        <authorList>
            <person name="Ross M.T."/>
            <person name="Grafham D.V."/>
            <person name="Coffey A.J."/>
            <person name="Scherer S."/>
            <person name="McLay K."/>
            <person name="Muzny D."/>
            <person name="Platzer M."/>
            <person name="Howell G.R."/>
            <person name="Burrows C."/>
            <person name="Bird C.P."/>
            <person name="Frankish A."/>
            <person name="Lovell F.L."/>
            <person name="Howe K.L."/>
            <person name="Ashurst J.L."/>
            <person name="Fulton R.S."/>
            <person name="Sudbrak R."/>
            <person name="Wen G."/>
            <person name="Jones M.C."/>
            <person name="Hurles M.E."/>
            <person name="Andrews T.D."/>
            <person name="Scott C.E."/>
            <person name="Searle S."/>
            <person name="Ramser J."/>
            <person name="Whittaker A."/>
            <person name="Deadman R."/>
            <person name="Carter N.P."/>
            <person name="Hunt S.E."/>
            <person name="Chen R."/>
            <person name="Cree A."/>
            <person name="Gunaratne P."/>
            <person name="Havlak P."/>
            <person name="Hodgson A."/>
            <person name="Metzker M.L."/>
            <person name="Richards S."/>
            <person name="Scott G."/>
            <person name="Steffen D."/>
            <person name="Sodergren E."/>
            <person name="Wheeler D.A."/>
            <person name="Worley K.C."/>
            <person name="Ainscough R."/>
            <person name="Ambrose K.D."/>
            <person name="Ansari-Lari M.A."/>
            <person name="Aradhya S."/>
            <person name="Ashwell R.I."/>
            <person name="Babbage A.K."/>
            <person name="Bagguley C.L."/>
            <person name="Ballabio A."/>
            <person name="Banerjee R."/>
            <person name="Barker G.E."/>
            <person name="Barlow K.F."/>
            <person name="Barrett I.P."/>
            <person name="Bates K.N."/>
            <person name="Beare D.M."/>
            <person name="Beasley H."/>
            <person name="Beasley O."/>
            <person name="Beck A."/>
            <person name="Bethel G."/>
            <person name="Blechschmidt K."/>
            <person name="Brady N."/>
            <person name="Bray-Allen S."/>
            <person name="Bridgeman A.M."/>
            <person name="Brown A.J."/>
            <person name="Brown M.J."/>
            <person name="Bonnin D."/>
            <person name="Bruford E.A."/>
            <person name="Buhay C."/>
            <person name="Burch P."/>
            <person name="Burford D."/>
            <person name="Burgess J."/>
            <person name="Burrill W."/>
            <person name="Burton J."/>
            <person name="Bye J.M."/>
            <person name="Carder C."/>
            <person name="Carrel L."/>
            <person name="Chako J."/>
            <person name="Chapman J.C."/>
            <person name="Chavez D."/>
            <person name="Chen E."/>
            <person name="Chen G."/>
            <person name="Chen Y."/>
            <person name="Chen Z."/>
            <person name="Chinault C."/>
            <person name="Ciccodicola A."/>
            <person name="Clark S.Y."/>
            <person name="Clarke G."/>
            <person name="Clee C.M."/>
            <person name="Clegg S."/>
            <person name="Clerc-Blankenburg K."/>
            <person name="Clifford K."/>
            <person name="Cobley V."/>
            <person name="Cole C.G."/>
            <person name="Conquer J.S."/>
            <person name="Corby N."/>
            <person name="Connor R.E."/>
            <person name="David R."/>
            <person name="Davies J."/>
            <person name="Davis C."/>
            <person name="Davis J."/>
            <person name="Delgado O."/>
            <person name="Deshazo D."/>
            <person name="Dhami P."/>
            <person name="Ding Y."/>
            <person name="Dinh H."/>
            <person name="Dodsworth S."/>
            <person name="Draper H."/>
            <person name="Dugan-Rocha S."/>
            <person name="Dunham A."/>
            <person name="Dunn M."/>
            <person name="Durbin K.J."/>
            <person name="Dutta I."/>
            <person name="Eades T."/>
            <person name="Ellwood M."/>
            <person name="Emery-Cohen A."/>
            <person name="Errington H."/>
            <person name="Evans K.L."/>
            <person name="Faulkner L."/>
            <person name="Francis F."/>
            <person name="Frankland J."/>
            <person name="Fraser A.E."/>
            <person name="Galgoczy P."/>
            <person name="Gilbert J."/>
            <person name="Gill R."/>
            <person name="Gloeckner G."/>
            <person name="Gregory S.G."/>
            <person name="Gribble S."/>
            <person name="Griffiths C."/>
            <person name="Grocock R."/>
            <person name="Gu Y."/>
            <person name="Gwilliam R."/>
            <person name="Hamilton C."/>
            <person name="Hart E.A."/>
            <person name="Hawes A."/>
            <person name="Heath P.D."/>
            <person name="Heitmann K."/>
            <person name="Hennig S."/>
            <person name="Hernandez J."/>
            <person name="Hinzmann B."/>
            <person name="Ho S."/>
            <person name="Hoffs M."/>
            <person name="Howden P.J."/>
            <person name="Huckle E.J."/>
            <person name="Hume J."/>
            <person name="Hunt P.J."/>
            <person name="Hunt A.R."/>
            <person name="Isherwood J."/>
            <person name="Jacob L."/>
            <person name="Johnson D."/>
            <person name="Jones S."/>
            <person name="de Jong P.J."/>
            <person name="Joseph S.S."/>
            <person name="Keenan S."/>
            <person name="Kelly S."/>
            <person name="Kershaw J.K."/>
            <person name="Khan Z."/>
            <person name="Kioschis P."/>
            <person name="Klages S."/>
            <person name="Knights A.J."/>
            <person name="Kosiura A."/>
            <person name="Kovar-Smith C."/>
            <person name="Laird G.K."/>
            <person name="Langford C."/>
            <person name="Lawlor S."/>
            <person name="Leversha M."/>
            <person name="Lewis L."/>
            <person name="Liu W."/>
            <person name="Lloyd C."/>
            <person name="Lloyd D.M."/>
            <person name="Loulseged H."/>
            <person name="Loveland J.E."/>
            <person name="Lovell J.D."/>
            <person name="Lozado R."/>
            <person name="Lu J."/>
            <person name="Lyne R."/>
            <person name="Ma J."/>
            <person name="Maheshwari M."/>
            <person name="Matthews L.H."/>
            <person name="McDowall J."/>
            <person name="McLaren S."/>
            <person name="McMurray A."/>
            <person name="Meidl P."/>
            <person name="Meitinger T."/>
            <person name="Milne S."/>
            <person name="Miner G."/>
            <person name="Mistry S.L."/>
            <person name="Morgan M."/>
            <person name="Morris S."/>
            <person name="Mueller I."/>
            <person name="Mullikin J.C."/>
            <person name="Nguyen N."/>
            <person name="Nordsiek G."/>
            <person name="Nyakatura G."/>
            <person name="O'dell C.N."/>
            <person name="Okwuonu G."/>
            <person name="Palmer S."/>
            <person name="Pandian R."/>
            <person name="Parker D."/>
            <person name="Parrish J."/>
            <person name="Pasternak S."/>
            <person name="Patel D."/>
            <person name="Pearce A.V."/>
            <person name="Pearson D.M."/>
            <person name="Pelan S.E."/>
            <person name="Perez L."/>
            <person name="Porter K.M."/>
            <person name="Ramsey Y."/>
            <person name="Reichwald K."/>
            <person name="Rhodes S."/>
            <person name="Ridler K.A."/>
            <person name="Schlessinger D."/>
            <person name="Schueler M.G."/>
            <person name="Sehra H.K."/>
            <person name="Shaw-Smith C."/>
            <person name="Shen H."/>
            <person name="Sheridan E.M."/>
            <person name="Shownkeen R."/>
            <person name="Skuce C.D."/>
            <person name="Smith M.L."/>
            <person name="Sotheran E.C."/>
            <person name="Steingruber H.E."/>
            <person name="Steward C.A."/>
            <person name="Storey R."/>
            <person name="Swann R.M."/>
            <person name="Swarbreck D."/>
            <person name="Tabor P.E."/>
            <person name="Taudien S."/>
            <person name="Taylor T."/>
            <person name="Teague B."/>
            <person name="Thomas K."/>
            <person name="Thorpe A."/>
            <person name="Timms K."/>
            <person name="Tracey A."/>
            <person name="Trevanion S."/>
            <person name="Tromans A.C."/>
            <person name="d'Urso M."/>
            <person name="Verduzco D."/>
            <person name="Villasana D."/>
            <person name="Waldron L."/>
            <person name="Wall M."/>
            <person name="Wang Q."/>
            <person name="Warren J."/>
            <person name="Warry G.L."/>
            <person name="Wei X."/>
            <person name="West A."/>
            <person name="Whitehead S.L."/>
            <person name="Whiteley M.N."/>
            <person name="Wilkinson J.E."/>
            <person name="Willey D.L."/>
            <person name="Williams G."/>
            <person name="Williams L."/>
            <person name="Williamson A."/>
            <person name="Williamson H."/>
            <person name="Wilming L."/>
            <person name="Woodmansey R.L."/>
            <person name="Wray P.W."/>
            <person name="Yen J."/>
            <person name="Zhang J."/>
            <person name="Zhou J."/>
            <person name="Zoghbi H."/>
            <person name="Zorilla S."/>
            <person name="Buck D."/>
            <person name="Reinhardt R."/>
            <person name="Poustka A."/>
            <person name="Rosenthal A."/>
            <person name="Lehrach H."/>
            <person name="Meindl A."/>
            <person name="Minx P.J."/>
            <person name="Hillier L.W."/>
            <person name="Willard H.F."/>
            <person name="Wilson R.K."/>
            <person name="Waterston R.H."/>
            <person name="Rice C.M."/>
            <person name="Vaudin M."/>
            <person name="Coulson A."/>
            <person name="Nelson D.L."/>
            <person name="Weinstock G."/>
            <person name="Sulston J.E."/>
            <person name="Durbin R.M."/>
            <person name="Hubbard T."/>
            <person name="Gibbs R.A."/>
            <person name="Beck S."/>
            <person name="Rogers J."/>
            <person name="Bentley D.R."/>
        </authorList>
    </citation>
    <scope>NUCLEOTIDE SEQUENCE [LARGE SCALE GENOMIC DNA]</scope>
</reference>
<reference key="2">
    <citation type="submission" date="2005-09" db="EMBL/GenBank/DDBJ databases">
        <authorList>
            <person name="Mural R.J."/>
            <person name="Istrail S."/>
            <person name="Sutton G.G."/>
            <person name="Florea L."/>
            <person name="Halpern A.L."/>
            <person name="Mobarry C.M."/>
            <person name="Lippert R."/>
            <person name="Walenz B."/>
            <person name="Shatkay H."/>
            <person name="Dew I."/>
            <person name="Miller J.R."/>
            <person name="Flanigan M.J."/>
            <person name="Edwards N.J."/>
            <person name="Bolanos R."/>
            <person name="Fasulo D."/>
            <person name="Halldorsson B.V."/>
            <person name="Hannenhalli S."/>
            <person name="Turner R."/>
            <person name="Yooseph S."/>
            <person name="Lu F."/>
            <person name="Nusskern D.R."/>
            <person name="Shue B.C."/>
            <person name="Zheng X.H."/>
            <person name="Zhong F."/>
            <person name="Delcher A.L."/>
            <person name="Huson D.H."/>
            <person name="Kravitz S.A."/>
            <person name="Mouchard L."/>
            <person name="Reinert K."/>
            <person name="Remington K.A."/>
            <person name="Clark A.G."/>
            <person name="Waterman M.S."/>
            <person name="Eichler E.E."/>
            <person name="Adams M.D."/>
            <person name="Hunkapiller M.W."/>
            <person name="Myers E.W."/>
            <person name="Venter J.C."/>
        </authorList>
    </citation>
    <scope>NUCLEOTIDE SEQUENCE [LARGE SCALE GENOMIC DNA]</scope>
</reference>
<dbReference type="EMBL" id="AC000113">
    <property type="status" value="NOT_ANNOTATED_CDS"/>
    <property type="molecule type" value="Genomic_DNA"/>
</dbReference>
<dbReference type="EMBL" id="AL031319">
    <property type="status" value="NOT_ANNOTATED_CDS"/>
    <property type="molecule type" value="Genomic_DNA"/>
</dbReference>
<dbReference type="EMBL" id="AL137844">
    <property type="status" value="NOT_ANNOTATED_CDS"/>
    <property type="molecule type" value="Genomic_DNA"/>
</dbReference>
<dbReference type="EMBL" id="KF459306">
    <property type="status" value="NOT_ANNOTATED_CDS"/>
    <property type="molecule type" value="Genomic_DNA"/>
</dbReference>
<dbReference type="EMBL" id="CH471120">
    <property type="protein sequence ID" value="EAX02661.1"/>
    <property type="molecule type" value="Genomic_DNA"/>
</dbReference>
<dbReference type="CCDS" id="CCDS94650.1"/>
<dbReference type="RefSeq" id="NP_001382951.1">
    <property type="nucleotide sequence ID" value="NM_001396022.1"/>
</dbReference>
<dbReference type="SMR" id="A0A804HLA8"/>
<dbReference type="FunCoup" id="A0A804HLA8">
    <property type="interactions" value="129"/>
</dbReference>
<dbReference type="PeptideAtlas" id="A0A804HLA8"/>
<dbReference type="Ensembl" id="ENST00000372054.3">
    <property type="protein sequence ID" value="ENSP00000508275.1"/>
    <property type="gene ID" value="ENSG00000133136.6"/>
</dbReference>
<dbReference type="Ensembl" id="ENST00000697560.1">
    <property type="protein sequence ID" value="ENSP00000513336.1"/>
    <property type="gene ID" value="ENSG00000133136.6"/>
</dbReference>
<dbReference type="GeneID" id="347687"/>
<dbReference type="MANE-Select" id="ENST00000697560.1">
    <property type="protein sequence ID" value="ENSP00000513336.1"/>
    <property type="RefSeq nucleotide sequence ID" value="NM_001396022.1"/>
    <property type="RefSeq protein sequence ID" value="NP_001382951.1"/>
</dbReference>
<dbReference type="AGR" id="HGNC:24826"/>
<dbReference type="GeneCards" id="GNG5B"/>
<dbReference type="HGNC" id="HGNC:24826">
    <property type="gene designation" value="GNG5B"/>
</dbReference>
<dbReference type="OpenTargets" id="ENSG00000133136"/>
<dbReference type="GeneTree" id="ENSGT01100000263525"/>
<dbReference type="InParanoid" id="A0A804HLA8"/>
<dbReference type="OrthoDB" id="6264244at2759"/>
<dbReference type="PRO" id="PR:A0A804HLA8"/>
<dbReference type="Proteomes" id="UP000005640">
    <property type="component" value="Chromosome X"/>
</dbReference>
<dbReference type="Bgee" id="ENSG00000133136">
    <property type="expression patterns" value="Expressed in male germ line stem cell (sensu Vertebrata) in testis and 66 other cell types or tissues"/>
</dbReference>
<dbReference type="GO" id="GO:0005834">
    <property type="term" value="C:heterotrimeric G-protein complex"/>
    <property type="evidence" value="ECO:0000318"/>
    <property type="project" value="GO_Central"/>
</dbReference>
<dbReference type="GO" id="GO:0031681">
    <property type="term" value="F:G-protein beta-subunit binding"/>
    <property type="evidence" value="ECO:0000318"/>
    <property type="project" value="GO_Central"/>
</dbReference>
<dbReference type="GO" id="GO:0007186">
    <property type="term" value="P:G protein-coupled receptor signaling pathway"/>
    <property type="evidence" value="ECO:0000318"/>
    <property type="project" value="GO_Central"/>
</dbReference>
<dbReference type="CDD" id="cd00068">
    <property type="entry name" value="GGL"/>
    <property type="match status" value="1"/>
</dbReference>
<dbReference type="FunFam" id="4.10.260.10:FF:000001">
    <property type="entry name" value="Guanine nucleotide-binding protein subunit gamma"/>
    <property type="match status" value="1"/>
</dbReference>
<dbReference type="Gene3D" id="4.10.260.10">
    <property type="entry name" value="Transducin (heterotrimeric G protein), gamma chain"/>
    <property type="match status" value="1"/>
</dbReference>
<dbReference type="InterPro" id="IPR015898">
    <property type="entry name" value="G-protein_gamma-like_dom"/>
</dbReference>
<dbReference type="InterPro" id="IPR036284">
    <property type="entry name" value="GGL_sf"/>
</dbReference>
<dbReference type="InterPro" id="IPR001770">
    <property type="entry name" value="Gprotein-gamma"/>
</dbReference>
<dbReference type="PANTHER" id="PTHR13809">
    <property type="entry name" value="GUANINE NUCLEOTIDE-BINDING PROTEIN GAMMA SUBUNIT"/>
    <property type="match status" value="1"/>
</dbReference>
<dbReference type="Pfam" id="PF00631">
    <property type="entry name" value="G-gamma"/>
    <property type="match status" value="1"/>
</dbReference>
<dbReference type="PRINTS" id="PR00321">
    <property type="entry name" value="GPROTEING"/>
</dbReference>
<dbReference type="SMART" id="SM01224">
    <property type="entry name" value="G_gamma"/>
    <property type="match status" value="1"/>
</dbReference>
<dbReference type="SMART" id="SM00224">
    <property type="entry name" value="GGL"/>
    <property type="match status" value="1"/>
</dbReference>
<dbReference type="SUPFAM" id="SSF48670">
    <property type="entry name" value="Transducin (heterotrimeric G protein), gamma chain"/>
    <property type="match status" value="1"/>
</dbReference>
<dbReference type="PROSITE" id="PS50058">
    <property type="entry name" value="G_PROTEIN_GAMMA"/>
    <property type="match status" value="1"/>
</dbReference>
<feature type="chain" id="PRO_0000456726" description="Guanine nucleotide-binding protein G(I)/G(S)/G(O) subunit gamma-5B">
    <location>
        <begin position="1"/>
        <end position="68"/>
    </location>
</feature>
<feature type="propeptide" id="PRO_0000456727" description="Removed in mature form" evidence="1">
    <location>
        <begin position="66"/>
        <end position="68"/>
    </location>
</feature>
<feature type="domain" description="G protein gamma" evidence="3">
    <location>
        <begin position="3"/>
        <end position="68"/>
    </location>
</feature>
<feature type="modified residue" description="Cysteine methyl ester" evidence="2">
    <location>
        <position position="65"/>
    </location>
</feature>
<feature type="lipid moiety-binding region" description="S-geranylgeranyl cysteine" evidence="2">
    <location>
        <position position="65"/>
    </location>
</feature>
<comment type="function">
    <text evidence="4">Guanine nucleotide-binding proteins (G proteins) are involved as a modulator or transducer in various transmembrane signaling systems. The beta and gamma chains are required for the GTPase activity, for replacement of GDP by GTP, and for G protein-effector interaction.</text>
</comment>
<comment type="subunit">
    <text evidence="1">G proteins are composed of 3 units; alpha, beta and gamma.</text>
</comment>
<comment type="subcellular location">
    <subcellularLocation>
        <location evidence="1">Cell membrane</location>
        <topology evidence="4">Lipid-anchor</topology>
        <orientation evidence="1">Cytoplasmic side</orientation>
    </subcellularLocation>
</comment>
<comment type="similarity">
    <text evidence="4">Belongs to the G protein gamma family.</text>
</comment>
<sequence>MSGFSSVAATKKVVQQLQLEAGLNSVKVSQAAADLKQFCLQNAQHDPLLTGVSSSTNPFRPQKVCSFL</sequence>
<gene>
    <name evidence="5" type="primary">GNG5B</name>
    <name type="synonym">GNG5P2</name>
</gene>